<keyword id="KW-0031">Aminopeptidase</keyword>
<keyword id="KW-0106">Calcium</keyword>
<keyword id="KW-0903">Direct protein sequencing</keyword>
<keyword id="KW-0378">Hydrolase</keyword>
<keyword id="KW-0460">Magnesium</keyword>
<keyword id="KW-0645">Protease</keyword>
<sequence>DVNMLWYVXR</sequence>
<reference key="1">
    <citation type="journal article" date="1995" name="Microbiology">
        <title>Capnocytophaga gingivalis aminopeptidase: a potential virulence factor.</title>
        <authorList>
            <person name="Spratt D.A."/>
            <person name="Greenman J."/>
            <person name="Schaffer A.G."/>
        </authorList>
    </citation>
    <scope>PROTEIN SEQUENCE</scope>
    <source>
        <strain>ATCC 33624 / DSM 3290 / CIP 102945 / JCM 12953 / NCTC 12372 / 27</strain>
    </source>
</reference>
<feature type="chain" id="PRO_0000064631" description="Aminopeptidase">
    <location>
        <begin position="1" status="less than"/>
        <end position="10" status="greater than"/>
    </location>
</feature>
<feature type="non-terminal residue">
    <location>
        <position position="1"/>
    </location>
</feature>
<feature type="non-terminal residue">
    <location>
        <position position="10"/>
    </location>
</feature>
<name>APE_CAPGI</name>
<dbReference type="EC" id="3.4.11.-"/>
<dbReference type="GO" id="GO:0004177">
    <property type="term" value="F:aminopeptidase activity"/>
    <property type="evidence" value="ECO:0007669"/>
    <property type="project" value="UniProtKB-KW"/>
</dbReference>
<dbReference type="GO" id="GO:0006508">
    <property type="term" value="P:proteolysis"/>
    <property type="evidence" value="ECO:0007669"/>
    <property type="project" value="UniProtKB-KW"/>
</dbReference>
<proteinExistence type="evidence at protein level"/>
<comment type="function">
    <text>Aminopeptidase which hydrolyzes substrates with free N-terminal amino acid residues but not N-terminal blocked ones. May be important in the nutrition and pathogenesis of the organism in the human oral cavity.</text>
</comment>
<comment type="cofactor">
    <cofactor>
        <name>Mg(2+)</name>
        <dbReference type="ChEBI" id="CHEBI:18420"/>
    </cofactor>
    <cofactor>
        <name>Ca(2+)</name>
        <dbReference type="ChEBI" id="CHEBI:29108"/>
    </cofactor>
</comment>
<comment type="biophysicochemical properties">
    <phDependence>
        <text>Optimum pH is 7.5.</text>
    </phDependence>
</comment>
<accession>P80474</accession>
<protein>
    <recommendedName>
        <fullName>Aminopeptidase</fullName>
        <ecNumber>3.4.11.-</ecNumber>
    </recommendedName>
</protein>
<organism>
    <name type="scientific">Capnocytophaga gingivalis</name>
    <dbReference type="NCBI Taxonomy" id="553178"/>
    <lineage>
        <taxon>Bacteria</taxon>
        <taxon>Pseudomonadati</taxon>
        <taxon>Bacteroidota</taxon>
        <taxon>Flavobacteriia</taxon>
        <taxon>Flavobacteriales</taxon>
        <taxon>Flavobacteriaceae</taxon>
        <taxon>Capnocytophaga</taxon>
    </lineage>
</organism>